<protein>
    <recommendedName>
        <fullName evidence="1">Chaperone SurA</fullName>
    </recommendedName>
    <alternativeName>
        <fullName evidence="1">Peptidyl-prolyl cis-trans isomerase SurA</fullName>
        <shortName evidence="1">PPIase SurA</shortName>
        <ecNumber evidence="1">5.2.1.8</ecNumber>
    </alternativeName>
    <alternativeName>
        <fullName evidence="1">Rotamase SurA</fullName>
    </alternativeName>
</protein>
<reference key="1">
    <citation type="journal article" date="2006" name="J. Bacteriol.">
        <title>Complete genome sequence of Yersinia pestis strains Antiqua and Nepal516: evidence of gene reduction in an emerging pathogen.</title>
        <authorList>
            <person name="Chain P.S.G."/>
            <person name="Hu P."/>
            <person name="Malfatti S.A."/>
            <person name="Radnedge L."/>
            <person name="Larimer F."/>
            <person name="Vergez L.M."/>
            <person name="Worsham P."/>
            <person name="Chu M.C."/>
            <person name="Andersen G.L."/>
        </authorList>
    </citation>
    <scope>NUCLEOTIDE SEQUENCE [LARGE SCALE GENOMIC DNA]</scope>
    <source>
        <strain>Antiqua</strain>
    </source>
</reference>
<sequence>MKNWRTLILGLVICANTAFAAPQEVDKVAAVVDNGVVLQSDIDGLLQSVKMNAQQSGLQVPDDSTLRHQILERLIMDNIQLQMAKKMGITITDQALDKAIADIAAQNRMTLAQMRSRLAADGLSYDTYREQIRKEMLTSEVRNNEVRRRITILPQEVESLAKQMGNQVSGDTELNLSHILIPLPENPTQQQVDQAEDLANKLVADIKGGADFGKLAIANSADSQALKGGQMGWGKLQELPSLFAERLQSAHKGEIVGPIRSGVGFHILKVNDMRGADQTISVTEVNARHILLKPSPMMTDEQARAKLEAAAAEIKSGKTSFATIAKEISQDPGSAMQGGELGWASPDIYDPAFRDALMKLKKGEISAPVHSSFGWHLIQLVDTRQVDKTDAAQKERAYRMLFNRKFAEEAQTWMQEQRAAAYVKILDGSNAQPQ</sequence>
<keyword id="KW-0143">Chaperone</keyword>
<keyword id="KW-0413">Isomerase</keyword>
<keyword id="KW-0574">Periplasm</keyword>
<keyword id="KW-0677">Repeat</keyword>
<keyword id="KW-0697">Rotamase</keyword>
<keyword id="KW-0732">Signal</keyword>
<dbReference type="EC" id="5.2.1.8" evidence="1"/>
<dbReference type="EMBL" id="CP000308">
    <property type="protein sequence ID" value="ABG16049.1"/>
    <property type="molecule type" value="Genomic_DNA"/>
</dbReference>
<dbReference type="RefSeq" id="WP_002220723.1">
    <property type="nucleotide sequence ID" value="NC_008150.1"/>
</dbReference>
<dbReference type="SMR" id="Q1C0H3"/>
<dbReference type="KEGG" id="ypa:YPA_4088"/>
<dbReference type="Proteomes" id="UP000001971">
    <property type="component" value="Chromosome"/>
</dbReference>
<dbReference type="GO" id="GO:0030288">
    <property type="term" value="C:outer membrane-bounded periplasmic space"/>
    <property type="evidence" value="ECO:0007669"/>
    <property type="project" value="InterPro"/>
</dbReference>
<dbReference type="GO" id="GO:0042277">
    <property type="term" value="F:peptide binding"/>
    <property type="evidence" value="ECO:0007669"/>
    <property type="project" value="InterPro"/>
</dbReference>
<dbReference type="GO" id="GO:0003755">
    <property type="term" value="F:peptidyl-prolyl cis-trans isomerase activity"/>
    <property type="evidence" value="ECO:0007669"/>
    <property type="project" value="UniProtKB-UniRule"/>
</dbReference>
<dbReference type="GO" id="GO:0051082">
    <property type="term" value="F:unfolded protein binding"/>
    <property type="evidence" value="ECO:0007669"/>
    <property type="project" value="UniProtKB-UniRule"/>
</dbReference>
<dbReference type="GO" id="GO:0043165">
    <property type="term" value="P:Gram-negative-bacterium-type cell outer membrane assembly"/>
    <property type="evidence" value="ECO:0007669"/>
    <property type="project" value="InterPro"/>
</dbReference>
<dbReference type="GO" id="GO:0006457">
    <property type="term" value="P:protein folding"/>
    <property type="evidence" value="ECO:0007669"/>
    <property type="project" value="UniProtKB-UniRule"/>
</dbReference>
<dbReference type="GO" id="GO:0050821">
    <property type="term" value="P:protein stabilization"/>
    <property type="evidence" value="ECO:0007669"/>
    <property type="project" value="InterPro"/>
</dbReference>
<dbReference type="Gene3D" id="3.10.50.40">
    <property type="match status" value="2"/>
</dbReference>
<dbReference type="Gene3D" id="1.10.4030.10">
    <property type="entry name" value="Porin chaperone SurA, peptide-binding domain"/>
    <property type="match status" value="2"/>
</dbReference>
<dbReference type="HAMAP" id="MF_01183">
    <property type="entry name" value="Chaperone_SurA"/>
    <property type="match status" value="1"/>
</dbReference>
<dbReference type="InterPro" id="IPR050280">
    <property type="entry name" value="OMP_Chaperone_SurA"/>
</dbReference>
<dbReference type="InterPro" id="IPR046357">
    <property type="entry name" value="PPIase_dom_sf"/>
</dbReference>
<dbReference type="InterPro" id="IPR000297">
    <property type="entry name" value="PPIase_PpiC"/>
</dbReference>
<dbReference type="InterPro" id="IPR023034">
    <property type="entry name" value="PPIase_SurA"/>
</dbReference>
<dbReference type="InterPro" id="IPR015391">
    <property type="entry name" value="SurA_N"/>
</dbReference>
<dbReference type="InterPro" id="IPR027304">
    <property type="entry name" value="Trigger_fact/SurA_dom_sf"/>
</dbReference>
<dbReference type="NCBIfam" id="NF008038">
    <property type="entry name" value="PRK10770.1"/>
    <property type="match status" value="1"/>
</dbReference>
<dbReference type="PANTHER" id="PTHR47637">
    <property type="entry name" value="CHAPERONE SURA"/>
    <property type="match status" value="1"/>
</dbReference>
<dbReference type="PANTHER" id="PTHR47637:SF1">
    <property type="entry name" value="CHAPERONE SURA"/>
    <property type="match status" value="1"/>
</dbReference>
<dbReference type="Pfam" id="PF00639">
    <property type="entry name" value="Rotamase"/>
    <property type="match status" value="1"/>
</dbReference>
<dbReference type="Pfam" id="PF13616">
    <property type="entry name" value="Rotamase_3"/>
    <property type="match status" value="1"/>
</dbReference>
<dbReference type="Pfam" id="PF09312">
    <property type="entry name" value="SurA_N"/>
    <property type="match status" value="1"/>
</dbReference>
<dbReference type="SUPFAM" id="SSF54534">
    <property type="entry name" value="FKBP-like"/>
    <property type="match status" value="2"/>
</dbReference>
<dbReference type="SUPFAM" id="SSF109998">
    <property type="entry name" value="Triger factor/SurA peptide-binding domain-like"/>
    <property type="match status" value="1"/>
</dbReference>
<dbReference type="PROSITE" id="PS01096">
    <property type="entry name" value="PPIC_PPIASE_1"/>
    <property type="match status" value="1"/>
</dbReference>
<dbReference type="PROSITE" id="PS50198">
    <property type="entry name" value="PPIC_PPIASE_2"/>
    <property type="match status" value="2"/>
</dbReference>
<feature type="signal peptide" evidence="1">
    <location>
        <begin position="1"/>
        <end position="20"/>
    </location>
</feature>
<feature type="chain" id="PRO_5000116368" description="Chaperone SurA">
    <location>
        <begin position="21"/>
        <end position="434"/>
    </location>
</feature>
<feature type="domain" description="PpiC 1" evidence="1">
    <location>
        <begin position="171"/>
        <end position="272"/>
    </location>
</feature>
<feature type="domain" description="PpiC 2" evidence="1">
    <location>
        <begin position="282"/>
        <end position="382"/>
    </location>
</feature>
<organism>
    <name type="scientific">Yersinia pestis bv. Antiqua (strain Antiqua)</name>
    <dbReference type="NCBI Taxonomy" id="360102"/>
    <lineage>
        <taxon>Bacteria</taxon>
        <taxon>Pseudomonadati</taxon>
        <taxon>Pseudomonadota</taxon>
        <taxon>Gammaproteobacteria</taxon>
        <taxon>Enterobacterales</taxon>
        <taxon>Yersiniaceae</taxon>
        <taxon>Yersinia</taxon>
    </lineage>
</organism>
<gene>
    <name evidence="1" type="primary">surA</name>
    <name type="ordered locus">YPA_4088</name>
</gene>
<accession>Q1C0H3</accession>
<comment type="function">
    <text evidence="1">Chaperone involved in the correct folding and assembly of outer membrane proteins. Recognizes specific patterns of aromatic residues and the orientation of their side chains, which are found more frequently in integral outer membrane proteins. May act in both early periplasmic and late outer membrane-associated steps of protein maturation.</text>
</comment>
<comment type="catalytic activity">
    <reaction evidence="1">
        <text>[protein]-peptidylproline (omega=180) = [protein]-peptidylproline (omega=0)</text>
        <dbReference type="Rhea" id="RHEA:16237"/>
        <dbReference type="Rhea" id="RHEA-COMP:10747"/>
        <dbReference type="Rhea" id="RHEA-COMP:10748"/>
        <dbReference type="ChEBI" id="CHEBI:83833"/>
        <dbReference type="ChEBI" id="CHEBI:83834"/>
        <dbReference type="EC" id="5.2.1.8"/>
    </reaction>
</comment>
<comment type="subcellular location">
    <subcellularLocation>
        <location evidence="1">Periplasm</location>
    </subcellularLocation>
    <text evidence="1">Is capable of associating with the outer membrane.</text>
</comment>
<comment type="domain">
    <text evidence="1">The PPIase activity resides only in the second parvulin domain. The N-terminal region and the C-terminal tail are necessary and sufficient for the chaperone activity of SurA. The PPIase activity is dispensable for SurA to function as a chaperone. The N-terminal region and the C-terminal tail are also required for porin recognition.</text>
</comment>
<proteinExistence type="inferred from homology"/>
<name>SURA_YERPA</name>
<evidence type="ECO:0000255" key="1">
    <source>
        <dbReference type="HAMAP-Rule" id="MF_01183"/>
    </source>
</evidence>